<proteinExistence type="evidence at transcript level"/>
<reference key="1">
    <citation type="submission" date="2005-11" db="EMBL/GenBank/DDBJ databases">
        <authorList>
            <consortium name="NIH - Mammalian Gene Collection (MGC) project"/>
        </authorList>
    </citation>
    <scope>NUCLEOTIDE SEQUENCE [LARGE SCALE MRNA]</scope>
    <source>
        <strain>Crossbred X Angus</strain>
        <tissue>Liver</tissue>
    </source>
</reference>
<keyword id="KW-0131">Cell cycle</keyword>
<keyword id="KW-0132">Cell division</keyword>
<keyword id="KW-0158">Chromosome</keyword>
<keyword id="KW-0175">Coiled coil</keyword>
<keyword id="KW-0963">Cytoplasm</keyword>
<keyword id="KW-0206">Cytoskeleton</keyword>
<keyword id="KW-0238">DNA-binding</keyword>
<keyword id="KW-0493">Microtubule</keyword>
<keyword id="KW-0498">Mitosis</keyword>
<keyword id="KW-0539">Nucleus</keyword>
<keyword id="KW-0597">Phosphoprotein</keyword>
<keyword id="KW-1185">Reference proteome</keyword>
<keyword id="KW-0832">Ubl conjugation</keyword>
<name>NUSAP_BOVIN</name>
<gene>
    <name type="primary">NUSAP1</name>
</gene>
<evidence type="ECO:0000250" key="1"/>
<evidence type="ECO:0000250" key="2">
    <source>
        <dbReference type="UniProtKB" id="Q9BXS6"/>
    </source>
</evidence>
<evidence type="ECO:0000255" key="3"/>
<evidence type="ECO:0000256" key="4">
    <source>
        <dbReference type="SAM" id="MobiDB-lite"/>
    </source>
</evidence>
<evidence type="ECO:0000305" key="5"/>
<organism>
    <name type="scientific">Bos taurus</name>
    <name type="common">Bovine</name>
    <dbReference type="NCBI Taxonomy" id="9913"/>
    <lineage>
        <taxon>Eukaryota</taxon>
        <taxon>Metazoa</taxon>
        <taxon>Chordata</taxon>
        <taxon>Craniata</taxon>
        <taxon>Vertebrata</taxon>
        <taxon>Euteleostomi</taxon>
        <taxon>Mammalia</taxon>
        <taxon>Eutheria</taxon>
        <taxon>Laurasiatheria</taxon>
        <taxon>Artiodactyla</taxon>
        <taxon>Ruminantia</taxon>
        <taxon>Pecora</taxon>
        <taxon>Bovidae</taxon>
        <taxon>Bovinae</taxon>
        <taxon>Bos</taxon>
    </lineage>
</organism>
<feature type="chain" id="PRO_0000302033" description="Nucleolar and spindle-associated protein 1">
    <location>
        <begin position="1"/>
        <end position="465"/>
    </location>
</feature>
<feature type="region of interest" description="Disordered" evidence="4">
    <location>
        <begin position="44"/>
        <end position="123"/>
    </location>
</feature>
<feature type="region of interest" description="Disordered" evidence="4">
    <location>
        <begin position="148"/>
        <end position="207"/>
    </location>
</feature>
<feature type="region of interest" description="Disordered" evidence="4">
    <location>
        <begin position="252"/>
        <end position="294"/>
    </location>
</feature>
<feature type="region of interest" description="Interaction with microtubules" evidence="1">
    <location>
        <begin position="262"/>
        <end position="405"/>
    </location>
</feature>
<feature type="region of interest" description="Disordered" evidence="4">
    <location>
        <begin position="308"/>
        <end position="338"/>
    </location>
</feature>
<feature type="region of interest" description="Disordered" evidence="4">
    <location>
        <begin position="396"/>
        <end position="454"/>
    </location>
</feature>
<feature type="coiled-coil region" evidence="3">
    <location>
        <begin position="32"/>
        <end position="61"/>
    </location>
</feature>
<feature type="coiled-coil region" evidence="3">
    <location>
        <begin position="430"/>
        <end position="457"/>
    </location>
</feature>
<feature type="short sequence motif" description="KEN box" evidence="1">
    <location>
        <begin position="407"/>
        <end position="413"/>
    </location>
</feature>
<feature type="compositionally biased region" description="Polar residues" evidence="4">
    <location>
        <begin position="56"/>
        <end position="75"/>
    </location>
</feature>
<feature type="compositionally biased region" description="Basic and acidic residues" evidence="4">
    <location>
        <begin position="76"/>
        <end position="86"/>
    </location>
</feature>
<feature type="compositionally biased region" description="Basic residues" evidence="4">
    <location>
        <begin position="87"/>
        <end position="96"/>
    </location>
</feature>
<feature type="compositionally biased region" description="Polar residues" evidence="4">
    <location>
        <begin position="154"/>
        <end position="166"/>
    </location>
</feature>
<feature type="compositionally biased region" description="Basic and acidic residues" evidence="4">
    <location>
        <begin position="169"/>
        <end position="179"/>
    </location>
</feature>
<feature type="compositionally biased region" description="Basic and acidic residues" evidence="4">
    <location>
        <begin position="432"/>
        <end position="453"/>
    </location>
</feature>
<feature type="modified residue" description="Phosphoserine" evidence="2">
    <location>
        <position position="152"/>
    </location>
</feature>
<feature type="modified residue" description="Phosphothreonine" evidence="2">
    <location>
        <position position="204"/>
    </location>
</feature>
<feature type="modified residue" description="Phosphoserine" evidence="2">
    <location>
        <position position="265"/>
    </location>
</feature>
<feature type="modified residue" description="Phosphothreonine" evidence="2">
    <location>
        <position position="269"/>
    </location>
</feature>
<feature type="modified residue" description="Phosphoserine" evidence="2">
    <location>
        <position position="272"/>
    </location>
</feature>
<feature type="modified residue" description="Phosphoserine" evidence="2">
    <location>
        <position position="292"/>
    </location>
</feature>
<feature type="modified residue" description="Phosphoserine" evidence="2">
    <location>
        <position position="299"/>
    </location>
</feature>
<feature type="modified residue" description="Phosphoserine" evidence="2">
    <location>
        <position position="334"/>
    </location>
</feature>
<feature type="modified residue" description="Phosphothreonine" evidence="2">
    <location>
        <position position="337"/>
    </location>
</feature>
<feature type="modified residue" description="Phosphothreonine" evidence="2">
    <location>
        <position position="361"/>
    </location>
</feature>
<feature type="modified residue" description="Phosphothreonine" evidence="2">
    <location>
        <position position="372"/>
    </location>
</feature>
<feature type="modified residue" description="Phosphoserine" evidence="2">
    <location>
        <position position="375"/>
    </location>
</feature>
<feature type="modified residue" description="Phosphoserine" evidence="2">
    <location>
        <position position="386"/>
    </location>
</feature>
<sequence>MIVPSLEELNSFKYSDLQNLAKSLGLRANLRADKLLRALKAHLKNEARKENENQDEIQTSASSCDEPEIQTSSQEQAEREPDDHVTKTRGRRKTVHRSPDSQANGNVQTEKKLPPVPNLQNHSEIKLCGPTKSQNQEKHENQVLRTAVEVPSLPNESQGDENTVSSGKHGIDGNEDPRVPSKRKKSLYTDGFSKPGKNKTASTTPNFKKLHEARFKEMESIDQYVERKKKHFEEHNSFNELKVLQRQPVTKGVPATPVPARGRLSVACTPGSQRRSQGRPHAGRSTLCVKGSAKRSALSAAKMNVRFSAATKDNEHKRSLTKTPARKSPHVTTSVNTPKGQAVLGTHKLKTTRGESVAVITPFKLTTEASQTPISHKKPVFDLKASLSRPLNYEPHKGKLKPWGQSKENNSLHEHVNRVSFHKKTYKQPRLQTREEQRKKHERERKEKKEKVLGVRRGLIIAERS</sequence>
<dbReference type="EMBL" id="BC110197">
    <property type="protein sequence ID" value="AAI10198.1"/>
    <property type="molecule type" value="mRNA"/>
</dbReference>
<dbReference type="RefSeq" id="NP_001040036.1">
    <property type="nucleotide sequence ID" value="NM_001046571.2"/>
</dbReference>
<dbReference type="RefSeq" id="XP_059746628.1">
    <property type="nucleotide sequence ID" value="XM_059890645.1"/>
</dbReference>
<dbReference type="RefSeq" id="XP_059746629.1">
    <property type="nucleotide sequence ID" value="XM_059890646.1"/>
</dbReference>
<dbReference type="RefSeq" id="XP_059746630.1">
    <property type="nucleotide sequence ID" value="XM_059890647.1"/>
</dbReference>
<dbReference type="SMR" id="Q2YDJ0"/>
<dbReference type="FunCoup" id="Q2YDJ0">
    <property type="interactions" value="1347"/>
</dbReference>
<dbReference type="STRING" id="9913.ENSBTAP00000014263"/>
<dbReference type="PaxDb" id="9913-ENSBTAP00000014263"/>
<dbReference type="Ensembl" id="ENSBTAT00000014263.5">
    <property type="protein sequence ID" value="ENSBTAP00000014263.3"/>
    <property type="gene ID" value="ENSBTAG00000010774.5"/>
</dbReference>
<dbReference type="GeneID" id="616028"/>
<dbReference type="KEGG" id="bta:616028"/>
<dbReference type="CTD" id="51203"/>
<dbReference type="VEuPathDB" id="HostDB:ENSBTAG00000010774"/>
<dbReference type="VGNC" id="VGNC:32370">
    <property type="gene designation" value="NUSAP1"/>
</dbReference>
<dbReference type="eggNOG" id="ENOG502QVI7">
    <property type="taxonomic scope" value="Eukaryota"/>
</dbReference>
<dbReference type="GeneTree" id="ENSGT00390000006370"/>
<dbReference type="HOGENOM" id="CLU_050701_0_0_1"/>
<dbReference type="InParanoid" id="Q2YDJ0"/>
<dbReference type="OMA" id="INDEAQE"/>
<dbReference type="OrthoDB" id="3258416at2759"/>
<dbReference type="TreeFam" id="TF329459"/>
<dbReference type="Proteomes" id="UP000009136">
    <property type="component" value="Chromosome 10"/>
</dbReference>
<dbReference type="Bgee" id="ENSBTAG00000010774">
    <property type="expression patterns" value="Expressed in oocyte and 105 other cell types or tissues"/>
</dbReference>
<dbReference type="GO" id="GO:0005694">
    <property type="term" value="C:chromosome"/>
    <property type="evidence" value="ECO:0007669"/>
    <property type="project" value="UniProtKB-SubCell"/>
</dbReference>
<dbReference type="GO" id="GO:0005737">
    <property type="term" value="C:cytoplasm"/>
    <property type="evidence" value="ECO:0007669"/>
    <property type="project" value="UniProtKB-SubCell"/>
</dbReference>
<dbReference type="GO" id="GO:0005874">
    <property type="term" value="C:microtubule"/>
    <property type="evidence" value="ECO:0007669"/>
    <property type="project" value="UniProtKB-KW"/>
</dbReference>
<dbReference type="GO" id="GO:0072686">
    <property type="term" value="C:mitotic spindle"/>
    <property type="evidence" value="ECO:0000318"/>
    <property type="project" value="GO_Central"/>
</dbReference>
<dbReference type="GO" id="GO:0005730">
    <property type="term" value="C:nucleolus"/>
    <property type="evidence" value="ECO:0000318"/>
    <property type="project" value="GO_Central"/>
</dbReference>
<dbReference type="GO" id="GO:0003677">
    <property type="term" value="F:DNA binding"/>
    <property type="evidence" value="ECO:0007669"/>
    <property type="project" value="UniProtKB-KW"/>
</dbReference>
<dbReference type="GO" id="GO:0008017">
    <property type="term" value="F:microtubule binding"/>
    <property type="evidence" value="ECO:0000318"/>
    <property type="project" value="GO_Central"/>
</dbReference>
<dbReference type="GO" id="GO:0040001">
    <property type="term" value="P:establishment of mitotic spindle localization"/>
    <property type="evidence" value="ECO:0000318"/>
    <property type="project" value="GO_Central"/>
</dbReference>
<dbReference type="GO" id="GO:0007076">
    <property type="term" value="P:mitotic chromosome condensation"/>
    <property type="evidence" value="ECO:0000318"/>
    <property type="project" value="GO_Central"/>
</dbReference>
<dbReference type="GO" id="GO:0000281">
    <property type="term" value="P:mitotic cytokinesis"/>
    <property type="evidence" value="ECO:0000318"/>
    <property type="project" value="GO_Central"/>
</dbReference>
<dbReference type="InterPro" id="IPR026756">
    <property type="entry name" value="NuSAP"/>
</dbReference>
<dbReference type="PANTHER" id="PTHR15874">
    <property type="entry name" value="NUCLEOLAR AND SPINDLE-ASSOCIATED PROTEIN 1"/>
    <property type="match status" value="1"/>
</dbReference>
<dbReference type="PANTHER" id="PTHR15874:SF1">
    <property type="entry name" value="NUCLEOLAR AND SPINDLE-ASSOCIATED PROTEIN 1"/>
    <property type="match status" value="1"/>
</dbReference>
<dbReference type="Pfam" id="PF16006">
    <property type="entry name" value="NUSAP"/>
    <property type="match status" value="1"/>
</dbReference>
<comment type="function">
    <text evidence="1">Microtubule-associated protein with the capacity to bundle and stabilize microtubules. May associate with chromosomes and promote the organization of mitotic spindle microtubules around them (By similarity).</text>
</comment>
<comment type="subunit">
    <text evidence="1">Interacts with DNA and microtubules. Microtubule bundling is inhibited by IPO7, KPNA2 and KPNB1 while association with DNA is also inhibited by IPO7 and KPNA2 (By similarity).</text>
</comment>
<comment type="subcellular location">
    <subcellularLocation>
        <location evidence="1">Cytoplasm</location>
    </subcellularLocation>
    <subcellularLocation>
        <location evidence="1">Nucleus</location>
        <location evidence="1">Nucleolus</location>
    </subcellularLocation>
    <subcellularLocation>
        <location evidence="1">Cytoplasm</location>
        <location evidence="1">Cytoskeleton</location>
        <location evidence="1">Spindle</location>
    </subcellularLocation>
    <subcellularLocation>
        <location evidence="1">Chromosome</location>
    </subcellularLocation>
    <text evidence="1">Found in the cytoplasm and nucleolus during interphase and redistributes to the mitotic spindle in prometaphase. Localizes to the mitotic spindle and to the chromosomes during anaphase and telophase then disappears from around the chromosomes during cytokinesis.</text>
</comment>
<comment type="domain">
    <text evidence="1">The KEN box is required for the FZR1-dependent degradation of this protein subsequent to ubiquitination.</text>
</comment>
<comment type="PTM">
    <text evidence="1">Ubiquitinated. Ubiquitination by FZR1 may lead to proteasome-dependent degradation of this protein (By similarity).</text>
</comment>
<comment type="similarity">
    <text evidence="5">Belongs to the NUSAP family.</text>
</comment>
<accession>Q2YDJ0</accession>
<protein>
    <recommendedName>
        <fullName>Nucleolar and spindle-associated protein 1</fullName>
        <shortName>NuSAP</shortName>
    </recommendedName>
</protein>